<evidence type="ECO:0000250" key="1">
    <source>
        <dbReference type="UniProtKB" id="F4IIS5"/>
    </source>
</evidence>
<evidence type="ECO:0000250" key="2">
    <source>
        <dbReference type="UniProtKB" id="O23826"/>
    </source>
</evidence>
<evidence type="ECO:0000255" key="3"/>
<evidence type="ECO:0000255" key="4">
    <source>
        <dbReference type="PROSITE-ProRule" id="PRU00283"/>
    </source>
</evidence>
<evidence type="ECO:0000256" key="5">
    <source>
        <dbReference type="SAM" id="MobiDB-lite"/>
    </source>
</evidence>
<evidence type="ECO:0000303" key="6">
    <source>
    </source>
</evidence>
<evidence type="ECO:0000305" key="7"/>
<evidence type="ECO:0000312" key="8">
    <source>
        <dbReference type="Araport" id="AT3G45850"/>
    </source>
</evidence>
<evidence type="ECO:0000312" key="9">
    <source>
        <dbReference type="EMBL" id="CAB82809.1"/>
    </source>
</evidence>
<gene>
    <name evidence="7" type="primary">KIN5D</name>
    <name evidence="8" type="ordered locus">At3g45850</name>
    <name evidence="9" type="ORF">F16L2_60</name>
</gene>
<accession>Q9LZU5</accession>
<reference key="1">
    <citation type="journal article" date="2000" name="Nature">
        <title>Sequence and analysis of chromosome 3 of the plant Arabidopsis thaliana.</title>
        <authorList>
            <person name="Salanoubat M."/>
            <person name="Lemcke K."/>
            <person name="Rieger M."/>
            <person name="Ansorge W."/>
            <person name="Unseld M."/>
            <person name="Fartmann B."/>
            <person name="Valle G."/>
            <person name="Bloecker H."/>
            <person name="Perez-Alonso M."/>
            <person name="Obermaier B."/>
            <person name="Delseny M."/>
            <person name="Boutry M."/>
            <person name="Grivell L.A."/>
            <person name="Mache R."/>
            <person name="Puigdomenech P."/>
            <person name="De Simone V."/>
            <person name="Choisne N."/>
            <person name="Artiguenave F."/>
            <person name="Robert C."/>
            <person name="Brottier P."/>
            <person name="Wincker P."/>
            <person name="Cattolico L."/>
            <person name="Weissenbach J."/>
            <person name="Saurin W."/>
            <person name="Quetier F."/>
            <person name="Schaefer M."/>
            <person name="Mueller-Auer S."/>
            <person name="Gabel C."/>
            <person name="Fuchs M."/>
            <person name="Benes V."/>
            <person name="Wurmbach E."/>
            <person name="Drzonek H."/>
            <person name="Erfle H."/>
            <person name="Jordan N."/>
            <person name="Bangert S."/>
            <person name="Wiedelmann R."/>
            <person name="Kranz H."/>
            <person name="Voss H."/>
            <person name="Holland R."/>
            <person name="Brandt P."/>
            <person name="Nyakatura G."/>
            <person name="Vezzi A."/>
            <person name="D'Angelo M."/>
            <person name="Pallavicini A."/>
            <person name="Toppo S."/>
            <person name="Simionati B."/>
            <person name="Conrad A."/>
            <person name="Hornischer K."/>
            <person name="Kauer G."/>
            <person name="Loehnert T.-H."/>
            <person name="Nordsiek G."/>
            <person name="Reichelt J."/>
            <person name="Scharfe M."/>
            <person name="Schoen O."/>
            <person name="Bargues M."/>
            <person name="Terol J."/>
            <person name="Climent J."/>
            <person name="Navarro P."/>
            <person name="Collado C."/>
            <person name="Perez-Perez A."/>
            <person name="Ottenwaelder B."/>
            <person name="Duchemin D."/>
            <person name="Cooke R."/>
            <person name="Laudie M."/>
            <person name="Berger-Llauro C."/>
            <person name="Purnelle B."/>
            <person name="Masuy D."/>
            <person name="de Haan M."/>
            <person name="Maarse A.C."/>
            <person name="Alcaraz J.-P."/>
            <person name="Cottet A."/>
            <person name="Casacuberta E."/>
            <person name="Monfort A."/>
            <person name="Argiriou A."/>
            <person name="Flores M."/>
            <person name="Liguori R."/>
            <person name="Vitale D."/>
            <person name="Mannhaupt G."/>
            <person name="Haase D."/>
            <person name="Schoof H."/>
            <person name="Rudd S."/>
            <person name="Zaccaria P."/>
            <person name="Mewes H.-W."/>
            <person name="Mayer K.F.X."/>
            <person name="Kaul S."/>
            <person name="Town C.D."/>
            <person name="Koo H.L."/>
            <person name="Tallon L.J."/>
            <person name="Jenkins J."/>
            <person name="Rooney T."/>
            <person name="Rizzo M."/>
            <person name="Walts A."/>
            <person name="Utterback T."/>
            <person name="Fujii C.Y."/>
            <person name="Shea T.P."/>
            <person name="Creasy T.H."/>
            <person name="Haas B."/>
            <person name="Maiti R."/>
            <person name="Wu D."/>
            <person name="Peterson J."/>
            <person name="Van Aken S."/>
            <person name="Pai G."/>
            <person name="Militscher J."/>
            <person name="Sellers P."/>
            <person name="Gill J.E."/>
            <person name="Feldblyum T.V."/>
            <person name="Preuss D."/>
            <person name="Lin X."/>
            <person name="Nierman W.C."/>
            <person name="Salzberg S.L."/>
            <person name="White O."/>
            <person name="Venter J.C."/>
            <person name="Fraser C.M."/>
            <person name="Kaneko T."/>
            <person name="Nakamura Y."/>
            <person name="Sato S."/>
            <person name="Kato T."/>
            <person name="Asamizu E."/>
            <person name="Sasamoto S."/>
            <person name="Kimura T."/>
            <person name="Idesawa K."/>
            <person name="Kawashima K."/>
            <person name="Kishida Y."/>
            <person name="Kiyokawa C."/>
            <person name="Kohara M."/>
            <person name="Matsumoto M."/>
            <person name="Matsuno A."/>
            <person name="Muraki A."/>
            <person name="Nakayama S."/>
            <person name="Nakazaki N."/>
            <person name="Shinpo S."/>
            <person name="Takeuchi C."/>
            <person name="Wada T."/>
            <person name="Watanabe A."/>
            <person name="Yamada M."/>
            <person name="Yasuda M."/>
            <person name="Tabata S."/>
        </authorList>
    </citation>
    <scope>NUCLEOTIDE SEQUENCE [LARGE SCALE GENOMIC DNA]</scope>
    <source>
        <strain>cv. Columbia</strain>
    </source>
</reference>
<reference key="2">
    <citation type="journal article" date="2017" name="Plant J.">
        <title>Araport11: a complete reannotation of the Arabidopsis thaliana reference genome.</title>
        <authorList>
            <person name="Cheng C.Y."/>
            <person name="Krishnakumar V."/>
            <person name="Chan A.P."/>
            <person name="Thibaud-Nissen F."/>
            <person name="Schobel S."/>
            <person name="Town C.D."/>
        </authorList>
    </citation>
    <scope>GENOME REANNOTATION</scope>
    <source>
        <strain>cv. Columbia</strain>
    </source>
</reference>
<reference key="3">
    <citation type="journal article" date="2001" name="BMC Genomics">
        <title>Kinesins in the Arabidopsis genome: a comparative analysis among eukaryotes.</title>
        <authorList>
            <person name="Reddy A.S."/>
            <person name="Day I.S."/>
        </authorList>
    </citation>
    <scope>GENE FAMILY</scope>
</reference>
<reference key="4">
    <citation type="journal article" date="2006" name="BMC Genomics">
        <title>Comprehensive comparative analysis of kinesins in photosynthetic eukaryotes.</title>
        <authorList>
            <person name="Richardson D.N."/>
            <person name="Simmons M.P."/>
            <person name="Reddy A.S."/>
        </authorList>
    </citation>
    <scope>GENE FAMILY</scope>
    <scope>NOMENCLATURE</scope>
</reference>
<reference key="5">
    <citation type="journal article" date="2006" name="Trends Plant Sci.">
        <title>Mitosis-specific kinesins in Arabidopsis.</title>
        <authorList>
            <person name="Vanstraelen M."/>
            <person name="Inze D."/>
            <person name="Geelen D."/>
        </authorList>
    </citation>
    <scope>REVIEW</scope>
</reference>
<reference key="6">
    <citation type="journal article" date="2012" name="Protoplasma">
        <title>Functions of the Arabidopsis kinesin superfamily of microtubule-based motor proteins.</title>
        <authorList>
            <person name="Zhu C."/>
            <person name="Dixit R."/>
        </authorList>
    </citation>
    <scope>REVIEW</scope>
</reference>
<protein>
    <recommendedName>
        <fullName evidence="7">Kinesin-like protein KIN-5D</fullName>
    </recommendedName>
</protein>
<sequence length="1058" mass="119009">MDSIQQRRGGIVSLSPAQTPRSSDKSARESRSSESNSTNRNDKEKGVNVQVILRCRPLSEDEARIHTPVVISCNENRREVAATQSIAGKHIDRHFAFDKVFGPASQQKDLYDQAICPIVFEVLEGYNCTIFAYGQTGTGKTYTMEGGARKKNGEFPSDAGVIPRAVKQIFDILEAQGAEYSMKVTFLELYNEEISDLLAPEETIKFVDEKSKKSIALMEDGKGSVFVRGLEEEIVSTANEIYKILEKGSAKRRTAETLLNKQSSRSHSIFSITIHIKENTPEGEEMIKCGKLNLVDLAGSENISRSGAREGRAREAGEINKSLLTLGRVINALVEHSGHIPYRDSKLTRLLRESLGGKTKTCVIATISPSIHCLEETLSTLDYAHRAKNIKNKPEINQKMMKSAVMKDLYSEIDRLKQEVYAAREKNGIYIPKDRYIQEEAEKKAMAEKIERLELQSESKDKRVVDLQELYNSQQILTAELSEKLEKTEKKLEETEHSLFDLEEKYRQANATIKEKEFVISNLLKSEKSLVERAFQLRTELESASSDVSNLFSKIERKDKIEDGNRFLIQKFQSQLTQQLELLHKTVASSVTQQEVQLKHMEEDMESFVSTKSEATEELRDRLSKLKRVYGSGIEALDNIAVKLDGNSQSTFSSLNSEVSKHSHELENVFKGFASEADMLLQDLQSSLNKQEEKLITFAQQQRKAHSRAVDTARSVSKVTVEFFKTLDTHATKLTGIVEEAQTVNHKKLSEFENKFEECAANEERQLLEKVAELLANSNARKKNLVQMAVHDLRESASTRTTTLQHEMSTMQDSTSSIKAEWSIHMEKTESSHHEDTSAVESGKKAMQEVLLNCLEKTEMSAHQWRKAQESLVSLERNNVASVDSIVRGGMDANENLRSQFSTAVSSSLDVFDAANSSLLTSIDHSLQLDNDACTKVNSMIIPCCEDLIELKSDHNHKIIEITENAGKCLLDEYVVDEPSCSTPKKRPIDIPSIESIEELRTPASEELLRAFRDEKLSKQANGDAKQQQQQQQQHLIRASSLYEAAVSDSRYPLSAVN</sequence>
<proteinExistence type="inferred from homology"/>
<feature type="chain" id="PRO_0000436270" description="Kinesin-like protein KIN-5D" evidence="3">
    <location>
        <begin position="1"/>
        <end position="1058"/>
    </location>
</feature>
<feature type="domain" description="Kinesin motor" evidence="4">
    <location>
        <begin position="48"/>
        <end position="390"/>
    </location>
</feature>
<feature type="region of interest" description="Disordered" evidence="5">
    <location>
        <begin position="1"/>
        <end position="43"/>
    </location>
</feature>
<feature type="coiled-coil region" evidence="3">
    <location>
        <begin position="438"/>
        <end position="517"/>
    </location>
</feature>
<feature type="compositionally biased region" description="Basic and acidic residues" evidence="5">
    <location>
        <begin position="22"/>
        <end position="32"/>
    </location>
</feature>
<feature type="binding site" evidence="4">
    <location>
        <begin position="134"/>
        <end position="141"/>
    </location>
    <ligand>
        <name>ATP</name>
        <dbReference type="ChEBI" id="CHEBI:30616"/>
    </ligand>
</feature>
<dbReference type="EMBL" id="AL162459">
    <property type="protein sequence ID" value="CAB82809.1"/>
    <property type="molecule type" value="Genomic_DNA"/>
</dbReference>
<dbReference type="EMBL" id="CP002686">
    <property type="status" value="NOT_ANNOTATED_CDS"/>
    <property type="molecule type" value="Genomic_DNA"/>
</dbReference>
<dbReference type="PIR" id="T47525">
    <property type="entry name" value="T47525"/>
</dbReference>
<dbReference type="SMR" id="Q9LZU5"/>
<dbReference type="FunCoup" id="Q9LZU5">
    <property type="interactions" value="2011"/>
</dbReference>
<dbReference type="STRING" id="3702.Q9LZU5"/>
<dbReference type="iPTMnet" id="Q9LZU5"/>
<dbReference type="PaxDb" id="3702-AT3G45850.1"/>
<dbReference type="Araport" id="AT3G45850"/>
<dbReference type="TAIR" id="AT3G45850"/>
<dbReference type="eggNOG" id="KOG0243">
    <property type="taxonomic scope" value="Eukaryota"/>
</dbReference>
<dbReference type="HOGENOM" id="CLU_001485_33_0_1"/>
<dbReference type="InParanoid" id="Q9LZU5"/>
<dbReference type="PhylomeDB" id="Q9LZU5"/>
<dbReference type="PRO" id="PR:Q9LZU5"/>
<dbReference type="Proteomes" id="UP000006548">
    <property type="component" value="Chromosome 3"/>
</dbReference>
<dbReference type="ExpressionAtlas" id="Q9LZU5">
    <property type="expression patterns" value="baseline and differential"/>
</dbReference>
<dbReference type="GO" id="GO:0005737">
    <property type="term" value="C:cytoplasm"/>
    <property type="evidence" value="ECO:0007669"/>
    <property type="project" value="UniProtKB-KW"/>
</dbReference>
<dbReference type="GO" id="GO:0072686">
    <property type="term" value="C:mitotic spindle"/>
    <property type="evidence" value="ECO:0000318"/>
    <property type="project" value="GO_Central"/>
</dbReference>
<dbReference type="GO" id="GO:0005876">
    <property type="term" value="C:spindle microtubule"/>
    <property type="evidence" value="ECO:0000318"/>
    <property type="project" value="GO_Central"/>
</dbReference>
<dbReference type="GO" id="GO:0005524">
    <property type="term" value="F:ATP binding"/>
    <property type="evidence" value="ECO:0007669"/>
    <property type="project" value="UniProtKB-KW"/>
</dbReference>
<dbReference type="GO" id="GO:0008017">
    <property type="term" value="F:microtubule binding"/>
    <property type="evidence" value="ECO:0007669"/>
    <property type="project" value="InterPro"/>
</dbReference>
<dbReference type="GO" id="GO:0008574">
    <property type="term" value="F:plus-end-directed microtubule motor activity"/>
    <property type="evidence" value="ECO:0000318"/>
    <property type="project" value="GO_Central"/>
</dbReference>
<dbReference type="GO" id="GO:0007018">
    <property type="term" value="P:microtubule-based movement"/>
    <property type="evidence" value="ECO:0007669"/>
    <property type="project" value="InterPro"/>
</dbReference>
<dbReference type="GO" id="GO:0090307">
    <property type="term" value="P:mitotic spindle assembly"/>
    <property type="evidence" value="ECO:0000318"/>
    <property type="project" value="GO_Central"/>
</dbReference>
<dbReference type="GO" id="GO:0051231">
    <property type="term" value="P:spindle elongation"/>
    <property type="evidence" value="ECO:0000318"/>
    <property type="project" value="GO_Central"/>
</dbReference>
<dbReference type="CDD" id="cd01364">
    <property type="entry name" value="KISc_BimC_Eg5"/>
    <property type="match status" value="1"/>
</dbReference>
<dbReference type="FunFam" id="3.40.850.10:FF:000019">
    <property type="entry name" value="Kinesin-like protein KIN-5D"/>
    <property type="match status" value="1"/>
</dbReference>
<dbReference type="Gene3D" id="3.40.850.10">
    <property type="entry name" value="Kinesin motor domain"/>
    <property type="match status" value="1"/>
</dbReference>
<dbReference type="InterPro" id="IPR047149">
    <property type="entry name" value="KIF11-like"/>
</dbReference>
<dbReference type="InterPro" id="IPR047241">
    <property type="entry name" value="KIF11-like_kin_motor_dom"/>
</dbReference>
<dbReference type="InterPro" id="IPR019821">
    <property type="entry name" value="Kinesin_motor_CS"/>
</dbReference>
<dbReference type="InterPro" id="IPR001752">
    <property type="entry name" value="Kinesin_motor_dom"/>
</dbReference>
<dbReference type="InterPro" id="IPR036961">
    <property type="entry name" value="Kinesin_motor_dom_sf"/>
</dbReference>
<dbReference type="InterPro" id="IPR027417">
    <property type="entry name" value="P-loop_NTPase"/>
</dbReference>
<dbReference type="PANTHER" id="PTHR47970">
    <property type="entry name" value="KINESIN-LIKE PROTEIN KIF11"/>
    <property type="match status" value="1"/>
</dbReference>
<dbReference type="PANTHER" id="PTHR47970:SF9">
    <property type="entry name" value="KINESIN-LIKE PROTEIN KIN-5D"/>
    <property type="match status" value="1"/>
</dbReference>
<dbReference type="Pfam" id="PF00225">
    <property type="entry name" value="Kinesin"/>
    <property type="match status" value="1"/>
</dbReference>
<dbReference type="PRINTS" id="PR00380">
    <property type="entry name" value="KINESINHEAVY"/>
</dbReference>
<dbReference type="SMART" id="SM00129">
    <property type="entry name" value="KISc"/>
    <property type="match status" value="1"/>
</dbReference>
<dbReference type="SUPFAM" id="SSF52540">
    <property type="entry name" value="P-loop containing nucleoside triphosphate hydrolases"/>
    <property type="match status" value="1"/>
</dbReference>
<dbReference type="PROSITE" id="PS00411">
    <property type="entry name" value="KINESIN_MOTOR_1"/>
    <property type="match status" value="1"/>
</dbReference>
<dbReference type="PROSITE" id="PS50067">
    <property type="entry name" value="KINESIN_MOTOR_2"/>
    <property type="match status" value="1"/>
</dbReference>
<organism>
    <name type="scientific">Arabidopsis thaliana</name>
    <name type="common">Mouse-ear cress</name>
    <dbReference type="NCBI Taxonomy" id="3702"/>
    <lineage>
        <taxon>Eukaryota</taxon>
        <taxon>Viridiplantae</taxon>
        <taxon>Streptophyta</taxon>
        <taxon>Embryophyta</taxon>
        <taxon>Tracheophyta</taxon>
        <taxon>Spermatophyta</taxon>
        <taxon>Magnoliopsida</taxon>
        <taxon>eudicotyledons</taxon>
        <taxon>Gunneridae</taxon>
        <taxon>Pentapetalae</taxon>
        <taxon>rosids</taxon>
        <taxon>malvids</taxon>
        <taxon>Brassicales</taxon>
        <taxon>Brassicaceae</taxon>
        <taxon>Camelineae</taxon>
        <taxon>Arabidopsis</taxon>
    </lineage>
</organism>
<keyword id="KW-0067">ATP-binding</keyword>
<keyword id="KW-0175">Coiled coil</keyword>
<keyword id="KW-0963">Cytoplasm</keyword>
<keyword id="KW-0206">Cytoskeleton</keyword>
<keyword id="KW-0493">Microtubule</keyword>
<keyword id="KW-0505">Motor protein</keyword>
<keyword id="KW-0547">Nucleotide-binding</keyword>
<keyword id="KW-1185">Reference proteome</keyword>
<comment type="function">
    <text evidence="1 2">Responsible for microtubule translocation. May be important for the organization of phragmoplast-specific arrays of microtubules (By similarity). Plays an essential role in stabilizing the mitotic spindle. Required during mitotic cytokinesis (By similarity).</text>
</comment>
<comment type="subcellular location">
    <subcellularLocation>
        <location evidence="1">Cytoplasm</location>
        <location evidence="1">Cytoskeleton</location>
    </subcellularLocation>
    <subcellularLocation>
        <location evidence="1">Cytoplasm</location>
        <location evidence="1">Cytoskeleton</location>
        <location evidence="1">Spindle</location>
    </subcellularLocation>
    <text evidence="1">Microtubule-associated.</text>
</comment>
<comment type="similarity">
    <text evidence="6">Belongs to the TRAFAC class myosin-kinesin ATPase superfamily. Kinesin family. KIN-5/BimC subfamily.</text>
</comment>
<name>KN5D_ARATH</name>